<comment type="catalytic activity">
    <reaction evidence="1">
        <text>tRNA(Lys) + L-lysine + ATP = L-lysyl-tRNA(Lys) + AMP + diphosphate</text>
        <dbReference type="Rhea" id="RHEA:20792"/>
        <dbReference type="Rhea" id="RHEA-COMP:9696"/>
        <dbReference type="Rhea" id="RHEA-COMP:9697"/>
        <dbReference type="ChEBI" id="CHEBI:30616"/>
        <dbReference type="ChEBI" id="CHEBI:32551"/>
        <dbReference type="ChEBI" id="CHEBI:33019"/>
        <dbReference type="ChEBI" id="CHEBI:78442"/>
        <dbReference type="ChEBI" id="CHEBI:78529"/>
        <dbReference type="ChEBI" id="CHEBI:456215"/>
        <dbReference type="EC" id="6.1.1.6"/>
    </reaction>
</comment>
<comment type="cofactor">
    <cofactor evidence="1">
        <name>Mg(2+)</name>
        <dbReference type="ChEBI" id="CHEBI:18420"/>
    </cofactor>
    <text evidence="1">Binds 3 Mg(2+) ions per subunit.</text>
</comment>
<comment type="subunit">
    <text evidence="1">Homodimer.</text>
</comment>
<comment type="subcellular location">
    <subcellularLocation>
        <location evidence="1">Cytoplasm</location>
    </subcellularLocation>
</comment>
<comment type="similarity">
    <text evidence="1">Belongs to the class-II aminoacyl-tRNA synthetase family.</text>
</comment>
<dbReference type="EC" id="6.1.1.6" evidence="1"/>
<dbReference type="EMBL" id="CP000733">
    <property type="protein sequence ID" value="ABS77783.1"/>
    <property type="molecule type" value="Genomic_DNA"/>
</dbReference>
<dbReference type="RefSeq" id="WP_005771651.1">
    <property type="nucleotide sequence ID" value="NC_009727.1"/>
</dbReference>
<dbReference type="SMR" id="A9KEG1"/>
<dbReference type="KEGG" id="cbd:CBUD_1642"/>
<dbReference type="HOGENOM" id="CLU_008255_6_0_6"/>
<dbReference type="Proteomes" id="UP000008555">
    <property type="component" value="Chromosome"/>
</dbReference>
<dbReference type="GO" id="GO:0005829">
    <property type="term" value="C:cytosol"/>
    <property type="evidence" value="ECO:0007669"/>
    <property type="project" value="TreeGrafter"/>
</dbReference>
<dbReference type="GO" id="GO:0005524">
    <property type="term" value="F:ATP binding"/>
    <property type="evidence" value="ECO:0007669"/>
    <property type="project" value="UniProtKB-UniRule"/>
</dbReference>
<dbReference type="GO" id="GO:0004824">
    <property type="term" value="F:lysine-tRNA ligase activity"/>
    <property type="evidence" value="ECO:0007669"/>
    <property type="project" value="UniProtKB-UniRule"/>
</dbReference>
<dbReference type="GO" id="GO:0000287">
    <property type="term" value="F:magnesium ion binding"/>
    <property type="evidence" value="ECO:0007669"/>
    <property type="project" value="UniProtKB-UniRule"/>
</dbReference>
<dbReference type="GO" id="GO:0000049">
    <property type="term" value="F:tRNA binding"/>
    <property type="evidence" value="ECO:0007669"/>
    <property type="project" value="TreeGrafter"/>
</dbReference>
<dbReference type="GO" id="GO:0006430">
    <property type="term" value="P:lysyl-tRNA aminoacylation"/>
    <property type="evidence" value="ECO:0007669"/>
    <property type="project" value="UniProtKB-UniRule"/>
</dbReference>
<dbReference type="CDD" id="cd00775">
    <property type="entry name" value="LysRS_core"/>
    <property type="match status" value="1"/>
</dbReference>
<dbReference type="CDD" id="cd04322">
    <property type="entry name" value="LysRS_N"/>
    <property type="match status" value="1"/>
</dbReference>
<dbReference type="FunFam" id="2.40.50.140:FF:000024">
    <property type="entry name" value="Lysine--tRNA ligase"/>
    <property type="match status" value="1"/>
</dbReference>
<dbReference type="FunFam" id="3.30.930.10:FF:000001">
    <property type="entry name" value="Lysine--tRNA ligase"/>
    <property type="match status" value="1"/>
</dbReference>
<dbReference type="Gene3D" id="3.30.930.10">
    <property type="entry name" value="Bira Bifunctional Protein, Domain 2"/>
    <property type="match status" value="1"/>
</dbReference>
<dbReference type="Gene3D" id="2.40.50.140">
    <property type="entry name" value="Nucleic acid-binding proteins"/>
    <property type="match status" value="1"/>
</dbReference>
<dbReference type="HAMAP" id="MF_00252">
    <property type="entry name" value="Lys_tRNA_synth_class2"/>
    <property type="match status" value="1"/>
</dbReference>
<dbReference type="InterPro" id="IPR004364">
    <property type="entry name" value="Aa-tRNA-synt_II"/>
</dbReference>
<dbReference type="InterPro" id="IPR006195">
    <property type="entry name" value="aa-tRNA-synth_II"/>
</dbReference>
<dbReference type="InterPro" id="IPR045864">
    <property type="entry name" value="aa-tRNA-synth_II/BPL/LPL"/>
</dbReference>
<dbReference type="InterPro" id="IPR002313">
    <property type="entry name" value="Lys-tRNA-ligase_II"/>
</dbReference>
<dbReference type="InterPro" id="IPR044136">
    <property type="entry name" value="Lys-tRNA-ligase_II_N"/>
</dbReference>
<dbReference type="InterPro" id="IPR018149">
    <property type="entry name" value="Lys-tRNA-synth_II_C"/>
</dbReference>
<dbReference type="InterPro" id="IPR012340">
    <property type="entry name" value="NA-bd_OB-fold"/>
</dbReference>
<dbReference type="InterPro" id="IPR004365">
    <property type="entry name" value="NA-bd_OB_tRNA"/>
</dbReference>
<dbReference type="NCBIfam" id="TIGR00499">
    <property type="entry name" value="lysS_bact"/>
    <property type="match status" value="1"/>
</dbReference>
<dbReference type="NCBIfam" id="NF001756">
    <property type="entry name" value="PRK00484.1"/>
    <property type="match status" value="1"/>
</dbReference>
<dbReference type="PANTHER" id="PTHR42918:SF15">
    <property type="entry name" value="LYSINE--TRNA LIGASE, CHLOROPLASTIC_MITOCHONDRIAL"/>
    <property type="match status" value="1"/>
</dbReference>
<dbReference type="PANTHER" id="PTHR42918">
    <property type="entry name" value="LYSYL-TRNA SYNTHETASE"/>
    <property type="match status" value="1"/>
</dbReference>
<dbReference type="Pfam" id="PF00152">
    <property type="entry name" value="tRNA-synt_2"/>
    <property type="match status" value="1"/>
</dbReference>
<dbReference type="Pfam" id="PF01336">
    <property type="entry name" value="tRNA_anti-codon"/>
    <property type="match status" value="1"/>
</dbReference>
<dbReference type="PRINTS" id="PR00982">
    <property type="entry name" value="TRNASYNTHLYS"/>
</dbReference>
<dbReference type="SUPFAM" id="SSF55681">
    <property type="entry name" value="Class II aaRS and biotin synthetases"/>
    <property type="match status" value="1"/>
</dbReference>
<dbReference type="SUPFAM" id="SSF50249">
    <property type="entry name" value="Nucleic acid-binding proteins"/>
    <property type="match status" value="1"/>
</dbReference>
<dbReference type="PROSITE" id="PS50862">
    <property type="entry name" value="AA_TRNA_LIGASE_II"/>
    <property type="match status" value="1"/>
</dbReference>
<sequence>MELKDQIKEENEQIAQRKLKLKKRREEGQAYPNDFKRDSLAADLHAVYDQFDSGALTAKAIRVKMAGRMMTRRIMGKASFAHIQDMKGRMQIYVTRDSLPQGVYSDFKSWDLGDIVGIEGELFKTKTEELSVKVDQIRLLTKALRPMPDKFHGLHDQEQRFRQRYLDLIVNESSRHLFQTRSQVIAQIRRFLDDRGYIEVETPMMHPLPGGAAARPFETHHNAMNMDLFLRIAPELYLKRLVVGGFEKVYEINRNFRNEGISTRHNPEFTMLEFYQAYATYEDMMMLTESMIRHLAEKIFGVMEIKYQGVRIDLNKPFPRLSLRDAILQFNPGITPDQIDHLETARELAHKYEIATPAHYGLGKIQTELFEKLVEEKLQQPIFITHFPKEVSPLSRANEENDFITDRFEFYVGGREIANGFSELNDPEDQAARFREQLKARNAGDLEAMSFDEDYITALEYGLPPTAGEGIGIDRLVMLFTDNASIRDVILFPLLRSK</sequence>
<protein>
    <recommendedName>
        <fullName evidence="1">Lysine--tRNA ligase</fullName>
        <ecNumber evidence="1">6.1.1.6</ecNumber>
    </recommendedName>
    <alternativeName>
        <fullName evidence="1">Lysyl-tRNA synthetase</fullName>
        <shortName evidence="1">LysRS</shortName>
    </alternativeName>
</protein>
<keyword id="KW-0030">Aminoacyl-tRNA synthetase</keyword>
<keyword id="KW-0067">ATP-binding</keyword>
<keyword id="KW-0963">Cytoplasm</keyword>
<keyword id="KW-0436">Ligase</keyword>
<keyword id="KW-0460">Magnesium</keyword>
<keyword id="KW-0479">Metal-binding</keyword>
<keyword id="KW-0547">Nucleotide-binding</keyword>
<keyword id="KW-0648">Protein biosynthesis</keyword>
<feature type="chain" id="PRO_1000078498" description="Lysine--tRNA ligase">
    <location>
        <begin position="1"/>
        <end position="498"/>
    </location>
</feature>
<feature type="binding site" evidence="1">
    <location>
        <position position="409"/>
    </location>
    <ligand>
        <name>Mg(2+)</name>
        <dbReference type="ChEBI" id="CHEBI:18420"/>
        <label>1</label>
    </ligand>
</feature>
<feature type="binding site" evidence="1">
    <location>
        <position position="416"/>
    </location>
    <ligand>
        <name>Mg(2+)</name>
        <dbReference type="ChEBI" id="CHEBI:18420"/>
        <label>1</label>
    </ligand>
</feature>
<feature type="binding site" evidence="1">
    <location>
        <position position="416"/>
    </location>
    <ligand>
        <name>Mg(2+)</name>
        <dbReference type="ChEBI" id="CHEBI:18420"/>
        <label>2</label>
    </ligand>
</feature>
<gene>
    <name evidence="1" type="primary">lysS</name>
    <name type="ordered locus">CBUD_1642</name>
</gene>
<organism>
    <name type="scientific">Coxiella burnetii (strain Dugway 5J108-111)</name>
    <dbReference type="NCBI Taxonomy" id="434922"/>
    <lineage>
        <taxon>Bacteria</taxon>
        <taxon>Pseudomonadati</taxon>
        <taxon>Pseudomonadota</taxon>
        <taxon>Gammaproteobacteria</taxon>
        <taxon>Legionellales</taxon>
        <taxon>Coxiellaceae</taxon>
        <taxon>Coxiella</taxon>
    </lineage>
</organism>
<reference key="1">
    <citation type="journal article" date="2009" name="Infect. Immun.">
        <title>Comparative genomics reveal extensive transposon-mediated genomic plasticity and diversity among potential effector proteins within the genus Coxiella.</title>
        <authorList>
            <person name="Beare P.A."/>
            <person name="Unsworth N."/>
            <person name="Andoh M."/>
            <person name="Voth D.E."/>
            <person name="Omsland A."/>
            <person name="Gilk S.D."/>
            <person name="Williams K.P."/>
            <person name="Sobral B.W."/>
            <person name="Kupko J.J. III"/>
            <person name="Porcella S.F."/>
            <person name="Samuel J.E."/>
            <person name="Heinzen R.A."/>
        </authorList>
    </citation>
    <scope>NUCLEOTIDE SEQUENCE [LARGE SCALE GENOMIC DNA]</scope>
    <source>
        <strain>Dugway 5J108-111</strain>
    </source>
</reference>
<evidence type="ECO:0000255" key="1">
    <source>
        <dbReference type="HAMAP-Rule" id="MF_00252"/>
    </source>
</evidence>
<name>SYK_COXBN</name>
<accession>A9KEG1</accession>
<proteinExistence type="inferred from homology"/>